<protein>
    <recommendedName>
        <fullName evidence="2">Large ribosomal subunit protein uL5</fullName>
    </recommendedName>
    <alternativeName>
        <fullName evidence="3">50S ribosomal protein L5</fullName>
    </alternativeName>
</protein>
<comment type="function">
    <text evidence="2">This is one of the proteins that bind and probably mediate the attachment of the 5S RNA into the large ribosomal subunit, where it forms part of the central protuberance. In the 70S ribosome it contacts protein S13 of the 30S subunit (bridge B1b), connecting the 2 subunits; this bridge is implicated in subunit movement. Contacts the P site tRNA; the 5S rRNA and some of its associated proteins might help stabilize positioning of ribosome-bound tRNAs.</text>
</comment>
<comment type="subunit">
    <text evidence="2">Part of the 50S ribosomal subunit; part of the 5S rRNA/L5/L18/L25 subcomplex. Contacts the 5S rRNA and the P site tRNA. Forms a bridge to the 30S subunit in the 70S ribosome.</text>
</comment>
<comment type="similarity">
    <text evidence="2">Belongs to the universal ribosomal protein uL5 family.</text>
</comment>
<organism>
    <name type="scientific">Escherichia coli O6:H1 (strain CFT073 / ATCC 700928 / UPEC)</name>
    <dbReference type="NCBI Taxonomy" id="199310"/>
    <lineage>
        <taxon>Bacteria</taxon>
        <taxon>Pseudomonadati</taxon>
        <taxon>Pseudomonadota</taxon>
        <taxon>Gammaproteobacteria</taxon>
        <taxon>Enterobacterales</taxon>
        <taxon>Enterobacteriaceae</taxon>
        <taxon>Escherichia</taxon>
    </lineage>
</organism>
<accession>P62400</accession>
<accession>P02389</accession>
<dbReference type="EMBL" id="AE014075">
    <property type="protein sequence ID" value="AAN82510.1"/>
    <property type="molecule type" value="Genomic_DNA"/>
</dbReference>
<dbReference type="RefSeq" id="WP_001096200.1">
    <property type="nucleotide sequence ID" value="NZ_CP051263.1"/>
</dbReference>
<dbReference type="SMR" id="P62400"/>
<dbReference type="STRING" id="199310.c4072"/>
<dbReference type="GeneID" id="93778679"/>
<dbReference type="KEGG" id="ecc:c4072"/>
<dbReference type="eggNOG" id="COG0094">
    <property type="taxonomic scope" value="Bacteria"/>
</dbReference>
<dbReference type="HOGENOM" id="CLU_061015_2_1_6"/>
<dbReference type="BioCyc" id="ECOL199310:C4072-MONOMER"/>
<dbReference type="Proteomes" id="UP000001410">
    <property type="component" value="Chromosome"/>
</dbReference>
<dbReference type="GO" id="GO:1990904">
    <property type="term" value="C:ribonucleoprotein complex"/>
    <property type="evidence" value="ECO:0007669"/>
    <property type="project" value="UniProtKB-KW"/>
</dbReference>
<dbReference type="GO" id="GO:0005840">
    <property type="term" value="C:ribosome"/>
    <property type="evidence" value="ECO:0007669"/>
    <property type="project" value="UniProtKB-KW"/>
</dbReference>
<dbReference type="GO" id="GO:0019843">
    <property type="term" value="F:rRNA binding"/>
    <property type="evidence" value="ECO:0007669"/>
    <property type="project" value="UniProtKB-UniRule"/>
</dbReference>
<dbReference type="GO" id="GO:0003735">
    <property type="term" value="F:structural constituent of ribosome"/>
    <property type="evidence" value="ECO:0007669"/>
    <property type="project" value="InterPro"/>
</dbReference>
<dbReference type="GO" id="GO:0000049">
    <property type="term" value="F:tRNA binding"/>
    <property type="evidence" value="ECO:0007669"/>
    <property type="project" value="UniProtKB-UniRule"/>
</dbReference>
<dbReference type="GO" id="GO:0006412">
    <property type="term" value="P:translation"/>
    <property type="evidence" value="ECO:0007669"/>
    <property type="project" value="UniProtKB-UniRule"/>
</dbReference>
<dbReference type="FunFam" id="3.30.1440.10:FF:000001">
    <property type="entry name" value="50S ribosomal protein L5"/>
    <property type="match status" value="1"/>
</dbReference>
<dbReference type="Gene3D" id="3.30.1440.10">
    <property type="match status" value="1"/>
</dbReference>
<dbReference type="HAMAP" id="MF_01333_B">
    <property type="entry name" value="Ribosomal_uL5_B"/>
    <property type="match status" value="1"/>
</dbReference>
<dbReference type="InterPro" id="IPR002132">
    <property type="entry name" value="Ribosomal_uL5"/>
</dbReference>
<dbReference type="InterPro" id="IPR020930">
    <property type="entry name" value="Ribosomal_uL5_bac-type"/>
</dbReference>
<dbReference type="InterPro" id="IPR031309">
    <property type="entry name" value="Ribosomal_uL5_C"/>
</dbReference>
<dbReference type="InterPro" id="IPR020929">
    <property type="entry name" value="Ribosomal_uL5_CS"/>
</dbReference>
<dbReference type="InterPro" id="IPR022803">
    <property type="entry name" value="Ribosomal_uL5_dom_sf"/>
</dbReference>
<dbReference type="InterPro" id="IPR031310">
    <property type="entry name" value="Ribosomal_uL5_N"/>
</dbReference>
<dbReference type="NCBIfam" id="NF000585">
    <property type="entry name" value="PRK00010.1"/>
    <property type="match status" value="1"/>
</dbReference>
<dbReference type="PANTHER" id="PTHR11994">
    <property type="entry name" value="60S RIBOSOMAL PROTEIN L11-RELATED"/>
    <property type="match status" value="1"/>
</dbReference>
<dbReference type="Pfam" id="PF00281">
    <property type="entry name" value="Ribosomal_L5"/>
    <property type="match status" value="1"/>
</dbReference>
<dbReference type="Pfam" id="PF00673">
    <property type="entry name" value="Ribosomal_L5_C"/>
    <property type="match status" value="1"/>
</dbReference>
<dbReference type="PIRSF" id="PIRSF002161">
    <property type="entry name" value="Ribosomal_L5"/>
    <property type="match status" value="1"/>
</dbReference>
<dbReference type="SUPFAM" id="SSF55282">
    <property type="entry name" value="RL5-like"/>
    <property type="match status" value="1"/>
</dbReference>
<dbReference type="PROSITE" id="PS00358">
    <property type="entry name" value="RIBOSOMAL_L5"/>
    <property type="match status" value="1"/>
</dbReference>
<evidence type="ECO:0000250" key="1"/>
<evidence type="ECO:0000255" key="2">
    <source>
        <dbReference type="HAMAP-Rule" id="MF_01333"/>
    </source>
</evidence>
<evidence type="ECO:0000305" key="3"/>
<gene>
    <name evidence="2" type="primary">rplE</name>
    <name type="ordered locus">c4072</name>
</gene>
<keyword id="KW-0007">Acetylation</keyword>
<keyword id="KW-1185">Reference proteome</keyword>
<keyword id="KW-0687">Ribonucleoprotein</keyword>
<keyword id="KW-0689">Ribosomal protein</keyword>
<keyword id="KW-0694">RNA-binding</keyword>
<keyword id="KW-0699">rRNA-binding</keyword>
<keyword id="KW-0820">tRNA-binding</keyword>
<name>RL5_ECOL6</name>
<proteinExistence type="inferred from homology"/>
<reference key="1">
    <citation type="journal article" date="2002" name="Proc. Natl. Acad. Sci. U.S.A.">
        <title>Extensive mosaic structure revealed by the complete genome sequence of uropathogenic Escherichia coli.</title>
        <authorList>
            <person name="Welch R.A."/>
            <person name="Burland V."/>
            <person name="Plunkett G. III"/>
            <person name="Redford P."/>
            <person name="Roesch P."/>
            <person name="Rasko D."/>
            <person name="Buckles E.L."/>
            <person name="Liou S.-R."/>
            <person name="Boutin A."/>
            <person name="Hackett J."/>
            <person name="Stroud D."/>
            <person name="Mayhew G.F."/>
            <person name="Rose D.J."/>
            <person name="Zhou S."/>
            <person name="Schwartz D.C."/>
            <person name="Perna N.T."/>
            <person name="Mobley H.L.T."/>
            <person name="Donnenberg M.S."/>
            <person name="Blattner F.R."/>
        </authorList>
    </citation>
    <scope>NUCLEOTIDE SEQUENCE [LARGE SCALE GENOMIC DNA]</scope>
    <source>
        <strain>CFT073 / ATCC 700928 / UPEC</strain>
    </source>
</reference>
<sequence>MAKLHDYYKDEVVKKLMTEFNYNSVMQVPRVEKITLNMGVGEAIADKKLLDNAAADLAAISGQKPLITKARKSVAGFKIRQGYPIGCKVTLRGERMWEFFERLITIAVPRIRDFRGLSAKSFDGRGNYSMGVREQIIFPEIDYDKVDRVRGLDITITTTAKSDEEGRALLAAFDFPFRK</sequence>
<feature type="initiator methionine" description="Removed" evidence="1">
    <location>
        <position position="1"/>
    </location>
</feature>
<feature type="chain" id="PRO_0000124926" description="Large ribosomal subunit protein uL5">
    <location>
        <begin position="2"/>
        <end position="179"/>
    </location>
</feature>
<feature type="modified residue" description="N6-acetyllysine" evidence="2">
    <location>
        <position position="3"/>
    </location>
</feature>